<name>FCAMR_PONAB</name>
<keyword id="KW-1064">Adaptive immunity</keyword>
<keyword id="KW-1003">Cell membrane</keyword>
<keyword id="KW-1015">Disulfide bond</keyword>
<keyword id="KW-0325">Glycoprotein</keyword>
<keyword id="KW-0391">Immunity</keyword>
<keyword id="KW-0393">Immunoglobulin domain</keyword>
<keyword id="KW-0472">Membrane</keyword>
<keyword id="KW-0675">Receptor</keyword>
<keyword id="KW-1185">Reference proteome</keyword>
<keyword id="KW-0732">Signal</keyword>
<keyword id="KW-0812">Transmembrane</keyword>
<keyword id="KW-1133">Transmembrane helix</keyword>
<sequence length="544" mass="58458">MPLFLILCLLQGSSFALPQKRPHPRWLWEGSLPSRTHLRAMGTLTPSSPLCWQEESSFAAPNALKGSRLVSGEPGGAVTIQCHYAPSSVNRHQRKYWCRLGPPRWICQTIVSTNHYTHHRYRDRVALTDFPQRGLFVVRLSQLSPDDIGCYLCGIGSENNMLFLSMNLTISAGPSSTLPTATPAAGELTMRSYGTASPVANRWTPGTTQTLGQGTAWDTVASTPGTSMTTASAEGRETPGATRLATPGTGSWAEGSVKAPAPIPESPASKAPAPIPESPASKSRSMSNTTEGVWEGTRSLVTNRAKASKDRREITTTKADRPREDTEGVRIALDAAKKVLGTIRPPALVSETLAWEIFPQATPVSKQQSLSSIGETTPAAGMWTLGTPAADVWILGTPTADVWTSMEAASGEGSSAGDLDAATGDRGPQVTLSQAPAVGPWRPPGKESFVKSTFPEDESSSRTLAPVSTMLALFMLMALVLLQRKLRRRRTSQEAERVTLIQMTHFLEVNPQPDQLPHVERKMLQDDSLPAGASLTAPERNPGP</sequence>
<evidence type="ECO:0000250" key="1"/>
<evidence type="ECO:0000250" key="2">
    <source>
        <dbReference type="UniProtKB" id="Q2TB54"/>
    </source>
</evidence>
<evidence type="ECO:0000250" key="3">
    <source>
        <dbReference type="UniProtKB" id="Q8WWV6"/>
    </source>
</evidence>
<evidence type="ECO:0000255" key="4"/>
<evidence type="ECO:0000255" key="5">
    <source>
        <dbReference type="PROSITE-ProRule" id="PRU00114"/>
    </source>
</evidence>
<evidence type="ECO:0000256" key="6">
    <source>
        <dbReference type="SAM" id="MobiDB-lite"/>
    </source>
</evidence>
<evidence type="ECO:0000305" key="7"/>
<comment type="function">
    <text evidence="2 3">Functions as a receptor for the Fc fragment of IgA and IgM. Binds IgA and IgM with high affinity and mediates their endocytosis. May function in the immune response to microbes mediated by IgA and IgM (By similarity).</text>
</comment>
<comment type="subunit">
    <text evidence="2">Interacts with IGHM; this interaction facilitates the endocytosis of IgM-coated microbes or IgM-antigen immune complexes.</text>
</comment>
<comment type="subcellular location">
    <subcellularLocation>
        <location evidence="1">Cell membrane</location>
        <topology evidence="1">Single-pass type I membrane protein</topology>
    </subcellularLocation>
</comment>
<comment type="PTM">
    <text evidence="1">N-glycosylated.</text>
</comment>
<comment type="sequence caution" evidence="7">
    <conflict type="erroneous initiation">
        <sequence resource="EMBL-CDS" id="CAH89828"/>
    </conflict>
</comment>
<comment type="sequence caution" evidence="7">
    <conflict type="erroneous initiation">
        <sequence resource="EMBL-CDS" id="CAH92390"/>
    </conflict>
</comment>
<organism>
    <name type="scientific">Pongo abelii</name>
    <name type="common">Sumatran orangutan</name>
    <name type="synonym">Pongo pygmaeus abelii</name>
    <dbReference type="NCBI Taxonomy" id="9601"/>
    <lineage>
        <taxon>Eukaryota</taxon>
        <taxon>Metazoa</taxon>
        <taxon>Chordata</taxon>
        <taxon>Craniata</taxon>
        <taxon>Vertebrata</taxon>
        <taxon>Euteleostomi</taxon>
        <taxon>Mammalia</taxon>
        <taxon>Eutheria</taxon>
        <taxon>Euarchontoglires</taxon>
        <taxon>Primates</taxon>
        <taxon>Haplorrhini</taxon>
        <taxon>Catarrhini</taxon>
        <taxon>Hominidae</taxon>
        <taxon>Pongo</taxon>
    </lineage>
</organism>
<reference key="1">
    <citation type="submission" date="2004-11" db="EMBL/GenBank/DDBJ databases">
        <authorList>
            <consortium name="The German cDNA consortium"/>
        </authorList>
    </citation>
    <scope>NUCLEOTIDE SEQUENCE [LARGE SCALE MRNA]</scope>
    <source>
        <tissue>Kidney</tissue>
    </source>
</reference>
<gene>
    <name type="primary">FCAMR</name>
</gene>
<protein>
    <recommendedName>
        <fullName>High affinity immunoglobulin alpha and immunoglobulin mu Fc receptor</fullName>
    </recommendedName>
    <alternativeName>
        <fullName>Fc alpha/mu receptor</fullName>
    </alternativeName>
    <cdAntigenName>CD351</cdAntigenName>
</protein>
<accession>Q5R770</accession>
<accession>Q5REH9</accession>
<feature type="signal peptide" evidence="4">
    <location>
        <begin position="1"/>
        <end position="16"/>
    </location>
</feature>
<feature type="chain" id="PRO_0000331485" description="High affinity immunoglobulin alpha and immunoglobulin mu Fc receptor">
    <location>
        <begin position="17"/>
        <end position="544"/>
    </location>
</feature>
<feature type="topological domain" description="Extracellular" evidence="4">
    <location>
        <begin position="17"/>
        <end position="462"/>
    </location>
</feature>
<feature type="transmembrane region" description="Helical" evidence="4">
    <location>
        <begin position="463"/>
        <end position="483"/>
    </location>
</feature>
<feature type="topological domain" description="Cytoplasmic" evidence="4">
    <location>
        <begin position="484"/>
        <end position="544"/>
    </location>
</feature>
<feature type="domain" description="Ig-like V-type">
    <location>
        <begin position="61"/>
        <end position="169"/>
    </location>
</feature>
<feature type="region of interest" description="Mediates immunoglobulin Fc fragment-binding" evidence="1">
    <location>
        <begin position="75"/>
        <end position="97"/>
    </location>
</feature>
<feature type="region of interest" description="Disordered" evidence="6">
    <location>
        <begin position="218"/>
        <end position="325"/>
    </location>
</feature>
<feature type="region of interest" description="Disordered" evidence="6">
    <location>
        <begin position="511"/>
        <end position="544"/>
    </location>
</feature>
<feature type="compositionally biased region" description="Polar residues" evidence="6">
    <location>
        <begin position="220"/>
        <end position="232"/>
    </location>
</feature>
<feature type="compositionally biased region" description="Polar residues" evidence="6">
    <location>
        <begin position="280"/>
        <end position="291"/>
    </location>
</feature>
<feature type="compositionally biased region" description="Basic and acidic residues" evidence="6">
    <location>
        <begin position="307"/>
        <end position="325"/>
    </location>
</feature>
<feature type="glycosylation site" description="N-linked (GlcNAc...) asparagine" evidence="4">
    <location>
        <position position="167"/>
    </location>
</feature>
<feature type="disulfide bond" evidence="5">
    <location>
        <begin position="82"/>
        <end position="153"/>
    </location>
</feature>
<feature type="sequence conflict" description="In Ref. 1; CAH89828." evidence="7" ref="1">
    <original>E</original>
    <variation>G</variation>
    <location>
        <position position="324"/>
    </location>
</feature>
<feature type="sequence conflict" description="In Ref. 1; CAH89828." evidence="7" ref="1">
    <original>F</original>
    <variation>S</variation>
    <location>
        <position position="449"/>
    </location>
</feature>
<proteinExistence type="evidence at transcript level"/>
<dbReference type="EMBL" id="CR857549">
    <property type="protein sequence ID" value="CAH89828.1"/>
    <property type="status" value="ALT_INIT"/>
    <property type="molecule type" value="mRNA"/>
</dbReference>
<dbReference type="EMBL" id="CR860248">
    <property type="protein sequence ID" value="CAH92390.1"/>
    <property type="status" value="ALT_INIT"/>
    <property type="molecule type" value="mRNA"/>
</dbReference>
<dbReference type="RefSeq" id="NP_001124847.1">
    <property type="nucleotide sequence ID" value="NM_001131375.1"/>
</dbReference>
<dbReference type="RefSeq" id="NP_001128857.1">
    <property type="nucleotide sequence ID" value="NM_001135385.2"/>
</dbReference>
<dbReference type="SMR" id="Q5R770"/>
<dbReference type="FunCoup" id="Q5R770">
    <property type="interactions" value="343"/>
</dbReference>
<dbReference type="STRING" id="9601.ENSPPYP00000000292"/>
<dbReference type="GlyCosmos" id="Q5R770">
    <property type="glycosylation" value="1 site, No reported glycans"/>
</dbReference>
<dbReference type="GeneID" id="100189781"/>
<dbReference type="KEGG" id="pon:100189781"/>
<dbReference type="CTD" id="83953"/>
<dbReference type="eggNOG" id="ENOG502SNZE">
    <property type="taxonomic scope" value="Eukaryota"/>
</dbReference>
<dbReference type="InParanoid" id="Q5R770"/>
<dbReference type="OrthoDB" id="8442846at2759"/>
<dbReference type="Proteomes" id="UP000001595">
    <property type="component" value="Unplaced"/>
</dbReference>
<dbReference type="GO" id="GO:0005886">
    <property type="term" value="C:plasma membrane"/>
    <property type="evidence" value="ECO:0007669"/>
    <property type="project" value="UniProtKB-SubCell"/>
</dbReference>
<dbReference type="GO" id="GO:0004888">
    <property type="term" value="F:transmembrane signaling receptor activity"/>
    <property type="evidence" value="ECO:0007669"/>
    <property type="project" value="TreeGrafter"/>
</dbReference>
<dbReference type="GO" id="GO:0002250">
    <property type="term" value="P:adaptive immune response"/>
    <property type="evidence" value="ECO:0007669"/>
    <property type="project" value="UniProtKB-KW"/>
</dbReference>
<dbReference type="CDD" id="cd05716">
    <property type="entry name" value="IgV_pIgR_like"/>
    <property type="match status" value="1"/>
</dbReference>
<dbReference type="FunFam" id="2.60.40.10:FF:001531">
    <property type="entry name" value="Fc fragment of IgA and IgM receptor"/>
    <property type="match status" value="1"/>
</dbReference>
<dbReference type="Gene3D" id="2.60.40.10">
    <property type="entry name" value="Immunoglobulins"/>
    <property type="match status" value="1"/>
</dbReference>
<dbReference type="InterPro" id="IPR050671">
    <property type="entry name" value="CD300_family_receptors"/>
</dbReference>
<dbReference type="InterPro" id="IPR007110">
    <property type="entry name" value="Ig-like_dom"/>
</dbReference>
<dbReference type="InterPro" id="IPR036179">
    <property type="entry name" value="Ig-like_dom_sf"/>
</dbReference>
<dbReference type="InterPro" id="IPR013783">
    <property type="entry name" value="Ig-like_fold"/>
</dbReference>
<dbReference type="InterPro" id="IPR003599">
    <property type="entry name" value="Ig_sub"/>
</dbReference>
<dbReference type="InterPro" id="IPR013106">
    <property type="entry name" value="Ig_V-set"/>
</dbReference>
<dbReference type="PANTHER" id="PTHR11860:SF49">
    <property type="entry name" value="HIGH AFFINITY IMMUNOGLOBULIN ALPHA AND IMMUNOGLOBULIN MU FC RECEPTOR"/>
    <property type="match status" value="1"/>
</dbReference>
<dbReference type="PANTHER" id="PTHR11860">
    <property type="entry name" value="POLYMERIC-IMMUNOGLOBULIN RECEPTOR"/>
    <property type="match status" value="1"/>
</dbReference>
<dbReference type="Pfam" id="PF07686">
    <property type="entry name" value="V-set"/>
    <property type="match status" value="1"/>
</dbReference>
<dbReference type="SMART" id="SM00409">
    <property type="entry name" value="IG"/>
    <property type="match status" value="1"/>
</dbReference>
<dbReference type="SUPFAM" id="SSF48726">
    <property type="entry name" value="Immunoglobulin"/>
    <property type="match status" value="1"/>
</dbReference>
<dbReference type="PROSITE" id="PS50835">
    <property type="entry name" value="IG_LIKE"/>
    <property type="match status" value="1"/>
</dbReference>